<proteinExistence type="evidence at protein level"/>
<name>CCA11_ARATH</name>
<dbReference type="EMBL" id="AC074228">
    <property type="protein sequence ID" value="AAG50557.1"/>
    <property type="molecule type" value="Genomic_DNA"/>
</dbReference>
<dbReference type="EMBL" id="CP002684">
    <property type="protein sequence ID" value="AEE32021.1"/>
    <property type="molecule type" value="Genomic_DNA"/>
</dbReference>
<dbReference type="EMBL" id="AK175406">
    <property type="protein sequence ID" value="BAD43169.1"/>
    <property type="molecule type" value="mRNA"/>
</dbReference>
<dbReference type="PIR" id="D96505">
    <property type="entry name" value="D96505"/>
</dbReference>
<dbReference type="RefSeq" id="NP_175077.1">
    <property type="nucleotide sequence ID" value="NM_103537.5"/>
</dbReference>
<dbReference type="SMR" id="Q9C6Y3"/>
<dbReference type="BioGRID" id="26239">
    <property type="interactions" value="11"/>
</dbReference>
<dbReference type="FunCoup" id="Q9C6Y3">
    <property type="interactions" value="1903"/>
</dbReference>
<dbReference type="IntAct" id="Q9C6Y3">
    <property type="interactions" value="2"/>
</dbReference>
<dbReference type="STRING" id="3702.Q9C6Y3"/>
<dbReference type="PaxDb" id="3702-AT1G44110.1"/>
<dbReference type="ProteomicsDB" id="239153"/>
<dbReference type="EnsemblPlants" id="AT1G44110.1">
    <property type="protein sequence ID" value="AT1G44110.1"/>
    <property type="gene ID" value="AT1G44110"/>
</dbReference>
<dbReference type="GeneID" id="841014"/>
<dbReference type="Gramene" id="AT1G44110.1">
    <property type="protein sequence ID" value="AT1G44110.1"/>
    <property type="gene ID" value="AT1G44110"/>
</dbReference>
<dbReference type="KEGG" id="ath:AT1G44110"/>
<dbReference type="Araport" id="AT1G44110"/>
<dbReference type="TAIR" id="AT1G44110">
    <property type="gene designation" value="CYCA1"/>
</dbReference>
<dbReference type="eggNOG" id="KOG0654">
    <property type="taxonomic scope" value="Eukaryota"/>
</dbReference>
<dbReference type="HOGENOM" id="CLU_020695_13_2_1"/>
<dbReference type="InParanoid" id="Q9C6Y3"/>
<dbReference type="OMA" id="MDETMSS"/>
<dbReference type="OrthoDB" id="5590282at2759"/>
<dbReference type="PhylomeDB" id="Q9C6Y3"/>
<dbReference type="PRO" id="PR:Q9C6Y3"/>
<dbReference type="Proteomes" id="UP000006548">
    <property type="component" value="Chromosome 1"/>
</dbReference>
<dbReference type="ExpressionAtlas" id="Q9C6Y3">
    <property type="expression patterns" value="baseline and differential"/>
</dbReference>
<dbReference type="GO" id="GO:0005737">
    <property type="term" value="C:cytoplasm"/>
    <property type="evidence" value="ECO:0000314"/>
    <property type="project" value="TAIR"/>
</dbReference>
<dbReference type="GO" id="GO:0005634">
    <property type="term" value="C:nucleus"/>
    <property type="evidence" value="ECO:0000314"/>
    <property type="project" value="TAIR"/>
</dbReference>
<dbReference type="GO" id="GO:0016538">
    <property type="term" value="F:cyclin-dependent protein serine/threonine kinase regulator activity"/>
    <property type="evidence" value="ECO:0007669"/>
    <property type="project" value="InterPro"/>
</dbReference>
<dbReference type="GO" id="GO:0051301">
    <property type="term" value="P:cell division"/>
    <property type="evidence" value="ECO:0007669"/>
    <property type="project" value="UniProtKB-KW"/>
</dbReference>
<dbReference type="GO" id="GO:0044772">
    <property type="term" value="P:mitotic cell cycle phase transition"/>
    <property type="evidence" value="ECO:0007669"/>
    <property type="project" value="InterPro"/>
</dbReference>
<dbReference type="CDD" id="cd20506">
    <property type="entry name" value="CYCLIN_AtCycA-like_rpt2"/>
    <property type="match status" value="1"/>
</dbReference>
<dbReference type="CDD" id="cd20562">
    <property type="entry name" value="CYCLIN_AtCycA_like_rpt1"/>
    <property type="match status" value="1"/>
</dbReference>
<dbReference type="FunFam" id="1.10.472.10:FF:000013">
    <property type="entry name" value="Cyclin A1"/>
    <property type="match status" value="1"/>
</dbReference>
<dbReference type="FunFam" id="1.10.472.10:FF:000167">
    <property type="entry name" value="Mitotic cyclin 6"/>
    <property type="match status" value="1"/>
</dbReference>
<dbReference type="Gene3D" id="1.10.472.10">
    <property type="entry name" value="Cyclin-like"/>
    <property type="match status" value="2"/>
</dbReference>
<dbReference type="InterPro" id="IPR039361">
    <property type="entry name" value="Cyclin"/>
</dbReference>
<dbReference type="InterPro" id="IPR013763">
    <property type="entry name" value="Cyclin-like_dom"/>
</dbReference>
<dbReference type="InterPro" id="IPR036915">
    <property type="entry name" value="Cyclin-like_sf"/>
</dbReference>
<dbReference type="InterPro" id="IPR046965">
    <property type="entry name" value="Cyclin_A/B-like"/>
</dbReference>
<dbReference type="InterPro" id="IPR004367">
    <property type="entry name" value="Cyclin_C-dom"/>
</dbReference>
<dbReference type="InterPro" id="IPR006671">
    <property type="entry name" value="Cyclin_N"/>
</dbReference>
<dbReference type="InterPro" id="IPR048258">
    <property type="entry name" value="Cyclins_cyclin-box"/>
</dbReference>
<dbReference type="PANTHER" id="PTHR10177">
    <property type="entry name" value="CYCLINS"/>
    <property type="match status" value="1"/>
</dbReference>
<dbReference type="Pfam" id="PF02984">
    <property type="entry name" value="Cyclin_C"/>
    <property type="match status" value="1"/>
</dbReference>
<dbReference type="Pfam" id="PF00134">
    <property type="entry name" value="Cyclin_N"/>
    <property type="match status" value="1"/>
</dbReference>
<dbReference type="PIRSF" id="PIRSF001771">
    <property type="entry name" value="Cyclin_A_B_D_E"/>
    <property type="match status" value="1"/>
</dbReference>
<dbReference type="SMART" id="SM00385">
    <property type="entry name" value="CYCLIN"/>
    <property type="match status" value="2"/>
</dbReference>
<dbReference type="SMART" id="SM01332">
    <property type="entry name" value="Cyclin_C"/>
    <property type="match status" value="1"/>
</dbReference>
<dbReference type="SUPFAM" id="SSF47954">
    <property type="entry name" value="Cyclin-like"/>
    <property type="match status" value="2"/>
</dbReference>
<dbReference type="PROSITE" id="PS00292">
    <property type="entry name" value="CYCLINS"/>
    <property type="match status" value="1"/>
</dbReference>
<comment type="subunit">
    <text evidence="2">Interacts with FZR2/CCS52A1, FZR1/CCS52A2 and FZR3/CCS52B.</text>
</comment>
<comment type="developmental stage">
    <text evidence="2 3">Expressed in the G2/M phases. Remains high in early G1 phase.</text>
</comment>
<comment type="similarity">
    <text evidence="4">Belongs to the cyclin family. Cyclin AB subfamily.</text>
</comment>
<evidence type="ECO:0000256" key="1">
    <source>
        <dbReference type="SAM" id="MobiDB-lite"/>
    </source>
</evidence>
<evidence type="ECO:0000269" key="2">
    <source>
    </source>
</evidence>
<evidence type="ECO:0000269" key="3">
    <source>
    </source>
</evidence>
<evidence type="ECO:0000305" key="4"/>
<accession>Q9C6Y3</accession>
<feature type="chain" id="PRO_0000286987" description="Cyclin-A1-1">
    <location>
        <begin position="1"/>
        <end position="460"/>
    </location>
</feature>
<feature type="region of interest" description="Disordered" evidence="1">
    <location>
        <begin position="1"/>
        <end position="52"/>
    </location>
</feature>
<feature type="region of interest" description="Disordered" evidence="1">
    <location>
        <begin position="95"/>
        <end position="126"/>
    </location>
</feature>
<feature type="compositionally biased region" description="Low complexity" evidence="1">
    <location>
        <begin position="10"/>
        <end position="19"/>
    </location>
</feature>
<feature type="compositionally biased region" description="Low complexity" evidence="1">
    <location>
        <begin position="100"/>
        <end position="111"/>
    </location>
</feature>
<protein>
    <recommendedName>
        <fullName>Cyclin-A1-1</fullName>
    </recommendedName>
    <alternativeName>
        <fullName>G2/mitotic-specific cyclin-A1-1</fullName>
        <shortName>CycA1;1</shortName>
    </alternativeName>
</protein>
<reference key="1">
    <citation type="journal article" date="2000" name="Nature">
        <title>Sequence and analysis of chromosome 1 of the plant Arabidopsis thaliana.</title>
        <authorList>
            <person name="Theologis A."/>
            <person name="Ecker J.R."/>
            <person name="Palm C.J."/>
            <person name="Federspiel N.A."/>
            <person name="Kaul S."/>
            <person name="White O."/>
            <person name="Alonso J."/>
            <person name="Altafi H."/>
            <person name="Araujo R."/>
            <person name="Bowman C.L."/>
            <person name="Brooks S.Y."/>
            <person name="Buehler E."/>
            <person name="Chan A."/>
            <person name="Chao Q."/>
            <person name="Chen H."/>
            <person name="Cheuk R.F."/>
            <person name="Chin C.W."/>
            <person name="Chung M.K."/>
            <person name="Conn L."/>
            <person name="Conway A.B."/>
            <person name="Conway A.R."/>
            <person name="Creasy T.H."/>
            <person name="Dewar K."/>
            <person name="Dunn P."/>
            <person name="Etgu P."/>
            <person name="Feldblyum T.V."/>
            <person name="Feng J.-D."/>
            <person name="Fong B."/>
            <person name="Fujii C.Y."/>
            <person name="Gill J.E."/>
            <person name="Goldsmith A.D."/>
            <person name="Haas B."/>
            <person name="Hansen N.F."/>
            <person name="Hughes B."/>
            <person name="Huizar L."/>
            <person name="Hunter J.L."/>
            <person name="Jenkins J."/>
            <person name="Johnson-Hopson C."/>
            <person name="Khan S."/>
            <person name="Khaykin E."/>
            <person name="Kim C.J."/>
            <person name="Koo H.L."/>
            <person name="Kremenetskaia I."/>
            <person name="Kurtz D.B."/>
            <person name="Kwan A."/>
            <person name="Lam B."/>
            <person name="Langin-Hooper S."/>
            <person name="Lee A."/>
            <person name="Lee J.M."/>
            <person name="Lenz C.A."/>
            <person name="Li J.H."/>
            <person name="Li Y.-P."/>
            <person name="Lin X."/>
            <person name="Liu S.X."/>
            <person name="Liu Z.A."/>
            <person name="Luros J.S."/>
            <person name="Maiti R."/>
            <person name="Marziali A."/>
            <person name="Militscher J."/>
            <person name="Miranda M."/>
            <person name="Nguyen M."/>
            <person name="Nierman W.C."/>
            <person name="Osborne B.I."/>
            <person name="Pai G."/>
            <person name="Peterson J."/>
            <person name="Pham P.K."/>
            <person name="Rizzo M."/>
            <person name="Rooney T."/>
            <person name="Rowley D."/>
            <person name="Sakano H."/>
            <person name="Salzberg S.L."/>
            <person name="Schwartz J.R."/>
            <person name="Shinn P."/>
            <person name="Southwick A.M."/>
            <person name="Sun H."/>
            <person name="Tallon L.J."/>
            <person name="Tambunga G."/>
            <person name="Toriumi M.J."/>
            <person name="Town C.D."/>
            <person name="Utterback T."/>
            <person name="Van Aken S."/>
            <person name="Vaysberg M."/>
            <person name="Vysotskaia V.S."/>
            <person name="Walker M."/>
            <person name="Wu D."/>
            <person name="Yu G."/>
            <person name="Fraser C.M."/>
            <person name="Venter J.C."/>
            <person name="Davis R.W."/>
        </authorList>
    </citation>
    <scope>NUCLEOTIDE SEQUENCE [LARGE SCALE GENOMIC DNA]</scope>
    <source>
        <strain>cv. Columbia</strain>
    </source>
</reference>
<reference key="2">
    <citation type="journal article" date="2017" name="Plant J.">
        <title>Araport11: a complete reannotation of the Arabidopsis thaliana reference genome.</title>
        <authorList>
            <person name="Cheng C.Y."/>
            <person name="Krishnakumar V."/>
            <person name="Chan A.P."/>
            <person name="Thibaud-Nissen F."/>
            <person name="Schobel S."/>
            <person name="Town C.D."/>
        </authorList>
    </citation>
    <scope>GENOME REANNOTATION</scope>
    <source>
        <strain>cv. Columbia</strain>
    </source>
</reference>
<reference key="3">
    <citation type="submission" date="2004-09" db="EMBL/GenBank/DDBJ databases">
        <title>Large-scale analysis of RIKEN Arabidopsis full-length (RAFL) cDNAs.</title>
        <authorList>
            <person name="Totoki Y."/>
            <person name="Seki M."/>
            <person name="Ishida J."/>
            <person name="Nakajima M."/>
            <person name="Enju A."/>
            <person name="Kamiya A."/>
            <person name="Narusaka M."/>
            <person name="Shin-i T."/>
            <person name="Nakagawa M."/>
            <person name="Sakamoto N."/>
            <person name="Oishi K."/>
            <person name="Kohara Y."/>
            <person name="Kobayashi M."/>
            <person name="Toyoda A."/>
            <person name="Sakaki Y."/>
            <person name="Sakurai T."/>
            <person name="Iida K."/>
            <person name="Akiyama K."/>
            <person name="Satou M."/>
            <person name="Toyoda T."/>
            <person name="Konagaya A."/>
            <person name="Carninci P."/>
            <person name="Kawai J."/>
            <person name="Hayashizaki Y."/>
            <person name="Shinozaki K."/>
        </authorList>
    </citation>
    <scope>NUCLEOTIDE SEQUENCE [LARGE SCALE MRNA]</scope>
    <source>
        <strain>cv. Columbia</strain>
    </source>
</reference>
<reference key="4">
    <citation type="journal article" date="2004" name="Plant Physiol.">
        <title>Genome-wide analysis of the cyclin family in Arabidopsis and comparative phylogenetic analysis of plant cyclin-like proteins.</title>
        <authorList>
            <person name="Wang G."/>
            <person name="Kong H."/>
            <person name="Sun Y."/>
            <person name="Zhang X."/>
            <person name="Zhang W."/>
            <person name="Altman N."/>
            <person name="dePamphilis C.W."/>
            <person name="Ma H."/>
        </authorList>
    </citation>
    <scope>GENE FAMILY</scope>
    <scope>NOMENCLATURE</scope>
</reference>
<reference key="5">
    <citation type="journal article" date="2005" name="Cell Cycle">
        <title>Arabidopsis anaphase-promoting complexes: multiple activators and wide range of substrates might keep APC perpetually busy.</title>
        <authorList>
            <person name="Fueloep K."/>
            <person name="Tarayre S."/>
            <person name="Kelemen Z."/>
            <person name="Horvath G."/>
            <person name="Kevei Z."/>
            <person name="Nikovics K."/>
            <person name="Bako L."/>
            <person name="Brown S."/>
            <person name="Kondorosi A."/>
            <person name="Kondorosi E."/>
        </authorList>
    </citation>
    <scope>DEVELOPMENTAL STAGE</scope>
    <scope>INTERACTION WITH FZR1; FZR2 AND FZR3</scope>
</reference>
<reference key="6">
    <citation type="journal article" date="2006" name="Plant Cell">
        <title>The D-type cyclin CYCD3;1 is limiting for the G1-to-S-phase transition in Arabidopsis.</title>
        <authorList>
            <person name="Menges M."/>
            <person name="Samland A.K."/>
            <person name="Planchais S."/>
            <person name="Murray J.A.H."/>
        </authorList>
    </citation>
    <scope>DEVELOPMENTAL STAGE</scope>
</reference>
<keyword id="KW-0131">Cell cycle</keyword>
<keyword id="KW-0132">Cell division</keyword>
<keyword id="KW-0195">Cyclin</keyword>
<keyword id="KW-1185">Reference proteome</keyword>
<organism>
    <name type="scientific">Arabidopsis thaliana</name>
    <name type="common">Mouse-ear cress</name>
    <dbReference type="NCBI Taxonomy" id="3702"/>
    <lineage>
        <taxon>Eukaryota</taxon>
        <taxon>Viridiplantae</taxon>
        <taxon>Streptophyta</taxon>
        <taxon>Embryophyta</taxon>
        <taxon>Tracheophyta</taxon>
        <taxon>Spermatophyta</taxon>
        <taxon>Magnoliopsida</taxon>
        <taxon>eudicotyledons</taxon>
        <taxon>Gunneridae</taxon>
        <taxon>Pentapetalae</taxon>
        <taxon>rosids</taxon>
        <taxon>malvids</taxon>
        <taxon>Brassicales</taxon>
        <taxon>Brassicaceae</taxon>
        <taxon>Camelineae</taxon>
        <taxon>Arabidopsis</taxon>
    </lineage>
</organism>
<sequence length="460" mass="51904">MSNILQNRRSSFSSSTKSSLAKRQAPSSSENSVKLMPAMTKKRAPLSNITNQKIASRLQNSDSVHCSNKSAKLKIAPSVCVNASFSSNLQQSIVPHKVASSPSKSDDGSVSMDETRSSSDSYKSPQVEYIENDDVSAVVSIERKALSNLFITPNSETIDNYCSRDVLSDMKKMDKNQIVNIDSNNGDPQLCATFACDIYKHLRASEAKKRPDVDYMERVQKDVNSSMRGILVDWLIEVSEEYRLVPETLYLTVNYIDRYLSGNVISRQKLQLLGVACMMIAAKYEEICAPQVEEFCYITDNTYLKDEVLDMESDVLNYLKFEMTAPTTKCFLRRFVRAAHGVHEAPLMQLECMANYIAELSLLEYTMLSHSPSLVAASAIFLAKYILDPTRRPWNSTLQHYTQYKAMELRGCVKDLQRLCSTAHGSTLPAVREKYSQHKYKFVAKKFCPSVIPQEFFNNS</sequence>
<gene>
    <name type="primary">CYCA1-1</name>
    <name type="ordered locus">At1g44110</name>
    <name type="ORF">T7O23.18</name>
</gene>